<dbReference type="EMBL" id="Y15316">
    <property type="protein sequence ID" value="CAA75578.1"/>
    <property type="molecule type" value="Genomic_DNA"/>
</dbReference>
<dbReference type="GO" id="GO:0005576">
    <property type="term" value="C:extracellular region"/>
    <property type="evidence" value="ECO:0007669"/>
    <property type="project" value="UniProtKB-SubCell"/>
</dbReference>
<dbReference type="GO" id="GO:0005186">
    <property type="term" value="F:pheromone activity"/>
    <property type="evidence" value="ECO:0007669"/>
    <property type="project" value="UniProtKB-KW"/>
</dbReference>
<dbReference type="InterPro" id="IPR008612">
    <property type="entry name" value="Mating_pheromone_EUPOC"/>
</dbReference>
<dbReference type="Pfam" id="PF05842">
    <property type="entry name" value="Euplotes_phero"/>
    <property type="match status" value="1"/>
</dbReference>
<name>MER1_EUPOC</name>
<evidence type="ECO:0000255" key="1"/>
<sequence>MKAIFIILAILMVTQAFKMTSKVNTKLQSQIQSKFQSKNKLASTFQTSSKLKGECDTIIPDFTGCNANDACPLSFTCSATGNDEQLCNAAGQNVIDMIFAHWSTCWNTYGNCIEFARQTYAIYNAPELCGCDYVDEETWINTLESVCPYV</sequence>
<comment type="function">
    <text>Mating ciliate pheromones (or gamones) are diffusible extracellular communication signals that distinguish different intraspecific classes of cells commonly referred to as 'mating types'. They prepare the latter for conjugation by changing their cell surface properties.</text>
</comment>
<comment type="subcellular location">
    <subcellularLocation>
        <location>Secreted</location>
    </subcellularLocation>
</comment>
<organism>
    <name type="scientific">Euplotoides octocarinatus</name>
    <name type="common">Freshwater ciliate</name>
    <name type="synonym">Euplotes octocarinatus</name>
    <dbReference type="NCBI Taxonomy" id="2716877"/>
    <lineage>
        <taxon>Eukaryota</taxon>
        <taxon>Sar</taxon>
        <taxon>Alveolata</taxon>
        <taxon>Ciliophora</taxon>
        <taxon>Intramacronucleata</taxon>
        <taxon>Spirotrichea</taxon>
        <taxon>Hypotrichia</taxon>
        <taxon>Euplotida</taxon>
        <taxon>Euplotidae</taxon>
        <taxon>Euplotes</taxon>
    </lineage>
</organism>
<accession>O15823</accession>
<protein>
    <recommendedName>
        <fullName>Mating pheromone 1</fullName>
    </recommendedName>
</protein>
<proteinExistence type="inferred from homology"/>
<feature type="signal peptide" evidence="1">
    <location>
        <begin position="1"/>
        <end position="16"/>
    </location>
</feature>
<feature type="propeptide" id="PRO_0000008674" evidence="1">
    <location>
        <begin position="17"/>
        <end position="52"/>
    </location>
</feature>
<feature type="peptide" id="PRO_0000008675" description="Mating pheromone 1">
    <location>
        <begin position="53"/>
        <end position="150"/>
    </location>
</feature>
<reference key="1">
    <citation type="journal article" date="1998" name="Eur. J. Protist.">
        <title>The pheromones and pheromone genes of new stocks of the Euplotes octocarinatus species complex.</title>
        <authorList>
            <person name="Bruenen-Nieweler C."/>
            <person name="Weiligmann J.C."/>
            <person name="Hansen B."/>
            <person name="Kuhlmann H.W."/>
            <person name="Moellenbeck M."/>
            <person name="Heckmann K."/>
        </authorList>
    </citation>
    <scope>NUCLEOTIDE SEQUENCE [GENOMIC DNA]</scope>
    <source>
        <strain>CC-4</strain>
    </source>
</reference>
<keyword id="KW-0588">Pheromone</keyword>
<keyword id="KW-0964">Secreted</keyword>
<keyword id="KW-0732">Signal</keyword>